<organism>
    <name type="scientific">Aliivibrio fischeri (strain ATCC 700601 / ES114)</name>
    <name type="common">Vibrio fischeri</name>
    <dbReference type="NCBI Taxonomy" id="312309"/>
    <lineage>
        <taxon>Bacteria</taxon>
        <taxon>Pseudomonadati</taxon>
        <taxon>Pseudomonadota</taxon>
        <taxon>Gammaproteobacteria</taxon>
        <taxon>Vibrionales</taxon>
        <taxon>Vibrionaceae</taxon>
        <taxon>Aliivibrio</taxon>
    </lineage>
</organism>
<proteinExistence type="inferred from homology"/>
<reference key="1">
    <citation type="journal article" date="2005" name="Proc. Natl. Acad. Sci. U.S.A.">
        <title>Complete genome sequence of Vibrio fischeri: a symbiotic bacterium with pathogenic congeners.</title>
        <authorList>
            <person name="Ruby E.G."/>
            <person name="Urbanowski M."/>
            <person name="Campbell J."/>
            <person name="Dunn A."/>
            <person name="Faini M."/>
            <person name="Gunsalus R."/>
            <person name="Lostroh P."/>
            <person name="Lupp C."/>
            <person name="McCann J."/>
            <person name="Millikan D."/>
            <person name="Schaefer A."/>
            <person name="Stabb E."/>
            <person name="Stevens A."/>
            <person name="Visick K."/>
            <person name="Whistler C."/>
            <person name="Greenberg E.P."/>
        </authorList>
    </citation>
    <scope>NUCLEOTIDE SEQUENCE [LARGE SCALE GENOMIC DNA]</scope>
    <source>
        <strain>ATCC 700601 / ES114</strain>
    </source>
</reference>
<sequence length="364" mass="40271">MLLIDIKKQLGDLLLDVKLSLPSSGISAIFGRSGAGKSSLANVISGLTSPEEGRITLNNRVLFDSESKVSMPPEKRNIGYVFQDARLFPHYKVEGNLLYGCGGKRTPHFNDVVKLLDIESLLTRYPHSLSGGEKQRVAIGRAILSEPALLIMDEPLASLDLPRKHEVMPYLERLAKEIKIPILYVSHSLDEILRLADNMVLLNQGSVSLSGDITSVWGSPLMRPWLNASEHSALLEGTISELHSDHPMTKVTLNNSQQGIWVKSPCDCVEEGKKIRLRIRANDVSLIKQQPQHSSIRNILPVVIEDLSEDKENDVVAVKLNLSGHVLWANITLWARDELQLGIGQSWFAQIKGVSVTQSDLCSK</sequence>
<gene>
    <name evidence="1" type="primary">modC</name>
    <name type="ordered locus">VF_A0292</name>
</gene>
<dbReference type="EC" id="7.3.2.5" evidence="1"/>
<dbReference type="EMBL" id="CP000021">
    <property type="protein sequence ID" value="AAW87362.1"/>
    <property type="molecule type" value="Genomic_DNA"/>
</dbReference>
<dbReference type="RefSeq" id="WP_011263180.1">
    <property type="nucleotide sequence ID" value="NC_006841.2"/>
</dbReference>
<dbReference type="RefSeq" id="YP_206250.1">
    <property type="nucleotide sequence ID" value="NC_006841.2"/>
</dbReference>
<dbReference type="SMR" id="Q5E0T4"/>
<dbReference type="STRING" id="312309.VF_A0292"/>
<dbReference type="EnsemblBacteria" id="AAW87362">
    <property type="protein sequence ID" value="AAW87362"/>
    <property type="gene ID" value="VF_A0292"/>
</dbReference>
<dbReference type="GeneID" id="54165614"/>
<dbReference type="KEGG" id="vfi:VF_A0292"/>
<dbReference type="PATRIC" id="fig|312309.11.peg.2896"/>
<dbReference type="eggNOG" id="COG4148">
    <property type="taxonomic scope" value="Bacteria"/>
</dbReference>
<dbReference type="HOGENOM" id="CLU_000604_1_1_6"/>
<dbReference type="OrthoDB" id="9802264at2"/>
<dbReference type="Proteomes" id="UP000000537">
    <property type="component" value="Chromosome II"/>
</dbReference>
<dbReference type="GO" id="GO:0005886">
    <property type="term" value="C:plasma membrane"/>
    <property type="evidence" value="ECO:0007669"/>
    <property type="project" value="UniProtKB-SubCell"/>
</dbReference>
<dbReference type="GO" id="GO:0015412">
    <property type="term" value="F:ABC-type molybdate transporter activity"/>
    <property type="evidence" value="ECO:0007669"/>
    <property type="project" value="UniProtKB-EC"/>
</dbReference>
<dbReference type="GO" id="GO:0005524">
    <property type="term" value="F:ATP binding"/>
    <property type="evidence" value="ECO:0007669"/>
    <property type="project" value="UniProtKB-KW"/>
</dbReference>
<dbReference type="GO" id="GO:0016887">
    <property type="term" value="F:ATP hydrolysis activity"/>
    <property type="evidence" value="ECO:0007669"/>
    <property type="project" value="InterPro"/>
</dbReference>
<dbReference type="FunFam" id="3.40.50.300:FF:000634">
    <property type="entry name" value="Molybdenum import ATP-binding protein ModC"/>
    <property type="match status" value="1"/>
</dbReference>
<dbReference type="Gene3D" id="2.40.50.100">
    <property type="match status" value="1"/>
</dbReference>
<dbReference type="Gene3D" id="3.40.50.300">
    <property type="entry name" value="P-loop containing nucleotide triphosphate hydrolases"/>
    <property type="match status" value="1"/>
</dbReference>
<dbReference type="InterPro" id="IPR003593">
    <property type="entry name" value="AAA+_ATPase"/>
</dbReference>
<dbReference type="InterPro" id="IPR003439">
    <property type="entry name" value="ABC_transporter-like_ATP-bd"/>
</dbReference>
<dbReference type="InterPro" id="IPR017871">
    <property type="entry name" value="ABC_transporter-like_CS"/>
</dbReference>
<dbReference type="InterPro" id="IPR008995">
    <property type="entry name" value="Mo/tungstate-bd_C_term_dom"/>
</dbReference>
<dbReference type="InterPro" id="IPR011868">
    <property type="entry name" value="ModC_ABC_ATP-bd"/>
</dbReference>
<dbReference type="InterPro" id="IPR050334">
    <property type="entry name" value="Molybdenum_import_ModC"/>
</dbReference>
<dbReference type="InterPro" id="IPR004606">
    <property type="entry name" value="Mop_domain"/>
</dbReference>
<dbReference type="InterPro" id="IPR027417">
    <property type="entry name" value="P-loop_NTPase"/>
</dbReference>
<dbReference type="InterPro" id="IPR005116">
    <property type="entry name" value="Transp-assoc_OB_typ1"/>
</dbReference>
<dbReference type="NCBIfam" id="TIGR02142">
    <property type="entry name" value="modC_ABC"/>
    <property type="match status" value="1"/>
</dbReference>
<dbReference type="NCBIfam" id="NF008355">
    <property type="entry name" value="PRK11144.1"/>
    <property type="match status" value="1"/>
</dbReference>
<dbReference type="PANTHER" id="PTHR43514">
    <property type="entry name" value="ABC TRANSPORTER I FAMILY MEMBER 10"/>
    <property type="match status" value="1"/>
</dbReference>
<dbReference type="PANTHER" id="PTHR43514:SF4">
    <property type="entry name" value="ABC TRANSPORTER I FAMILY MEMBER 10"/>
    <property type="match status" value="1"/>
</dbReference>
<dbReference type="Pfam" id="PF00005">
    <property type="entry name" value="ABC_tran"/>
    <property type="match status" value="1"/>
</dbReference>
<dbReference type="Pfam" id="PF03459">
    <property type="entry name" value="TOBE"/>
    <property type="match status" value="1"/>
</dbReference>
<dbReference type="SMART" id="SM00382">
    <property type="entry name" value="AAA"/>
    <property type="match status" value="1"/>
</dbReference>
<dbReference type="SUPFAM" id="SSF50331">
    <property type="entry name" value="MOP-like"/>
    <property type="match status" value="1"/>
</dbReference>
<dbReference type="SUPFAM" id="SSF52540">
    <property type="entry name" value="P-loop containing nucleoside triphosphate hydrolases"/>
    <property type="match status" value="1"/>
</dbReference>
<dbReference type="PROSITE" id="PS00211">
    <property type="entry name" value="ABC_TRANSPORTER_1"/>
    <property type="match status" value="1"/>
</dbReference>
<dbReference type="PROSITE" id="PS50893">
    <property type="entry name" value="ABC_TRANSPORTER_2"/>
    <property type="match status" value="1"/>
</dbReference>
<dbReference type="PROSITE" id="PS51241">
    <property type="entry name" value="MODC"/>
    <property type="match status" value="1"/>
</dbReference>
<dbReference type="PROSITE" id="PS51866">
    <property type="entry name" value="MOP"/>
    <property type="match status" value="1"/>
</dbReference>
<accession>Q5E0T4</accession>
<evidence type="ECO:0000255" key="1">
    <source>
        <dbReference type="HAMAP-Rule" id="MF_01705"/>
    </source>
</evidence>
<evidence type="ECO:0000255" key="2">
    <source>
        <dbReference type="PROSITE-ProRule" id="PRU01213"/>
    </source>
</evidence>
<feature type="chain" id="PRO_0000271697" description="Molybdenum import ATP-binding protein ModC">
    <location>
        <begin position="1"/>
        <end position="364"/>
    </location>
</feature>
<feature type="domain" description="ABC transporter" evidence="1">
    <location>
        <begin position="1"/>
        <end position="229"/>
    </location>
</feature>
<feature type="domain" description="Mop" evidence="2">
    <location>
        <begin position="293"/>
        <end position="360"/>
    </location>
</feature>
<feature type="binding site" evidence="1">
    <location>
        <begin position="31"/>
        <end position="38"/>
    </location>
    <ligand>
        <name>ATP</name>
        <dbReference type="ChEBI" id="CHEBI:30616"/>
    </ligand>
</feature>
<keyword id="KW-0067">ATP-binding</keyword>
<keyword id="KW-0997">Cell inner membrane</keyword>
<keyword id="KW-1003">Cell membrane</keyword>
<keyword id="KW-0472">Membrane</keyword>
<keyword id="KW-0500">Molybdenum</keyword>
<keyword id="KW-0547">Nucleotide-binding</keyword>
<keyword id="KW-1185">Reference proteome</keyword>
<keyword id="KW-1278">Translocase</keyword>
<keyword id="KW-0813">Transport</keyword>
<comment type="function">
    <text evidence="1">Part of the ABC transporter complex ModABC involved in molybdenum import. Responsible for energy coupling to the transport system.</text>
</comment>
<comment type="catalytic activity">
    <reaction evidence="1">
        <text>molybdate(out) + ATP + H2O = molybdate(in) + ADP + phosphate + H(+)</text>
        <dbReference type="Rhea" id="RHEA:22020"/>
        <dbReference type="ChEBI" id="CHEBI:15377"/>
        <dbReference type="ChEBI" id="CHEBI:15378"/>
        <dbReference type="ChEBI" id="CHEBI:30616"/>
        <dbReference type="ChEBI" id="CHEBI:36264"/>
        <dbReference type="ChEBI" id="CHEBI:43474"/>
        <dbReference type="ChEBI" id="CHEBI:456216"/>
        <dbReference type="EC" id="7.3.2.5"/>
    </reaction>
</comment>
<comment type="subunit">
    <text evidence="1">The complex is composed of two ATP-binding proteins (ModC), two transmembrane proteins (ModB) and a solute-binding protein (ModA).</text>
</comment>
<comment type="subcellular location">
    <subcellularLocation>
        <location evidence="1">Cell inner membrane</location>
        <topology evidence="1">Peripheral membrane protein</topology>
    </subcellularLocation>
</comment>
<comment type="similarity">
    <text evidence="1">Belongs to the ABC transporter superfamily. Molybdate importer (TC 3.A.1.8) family.</text>
</comment>
<protein>
    <recommendedName>
        <fullName evidence="1">Molybdenum import ATP-binding protein ModC</fullName>
        <ecNumber evidence="1">7.3.2.5</ecNumber>
    </recommendedName>
</protein>
<name>MODC_ALIF1</name>